<feature type="chain" id="PRO_0000324028" description="Light-independent protochlorophyllide reductase subunit N">
    <location>
        <begin position="1"/>
        <end position="412"/>
    </location>
</feature>
<feature type="binding site" evidence="1">
    <location>
        <position position="17"/>
    </location>
    <ligand>
        <name>[4Fe-4S] cluster</name>
        <dbReference type="ChEBI" id="CHEBI:49883"/>
        <note>ligand shared with heterodimeric partner</note>
    </ligand>
</feature>
<feature type="binding site" evidence="1">
    <location>
        <position position="42"/>
    </location>
    <ligand>
        <name>[4Fe-4S] cluster</name>
        <dbReference type="ChEBI" id="CHEBI:49883"/>
        <note>ligand shared with heterodimeric partner</note>
    </ligand>
</feature>
<feature type="binding site" evidence="1">
    <location>
        <position position="103"/>
    </location>
    <ligand>
        <name>[4Fe-4S] cluster</name>
        <dbReference type="ChEBI" id="CHEBI:49883"/>
        <note>ligand shared with heterodimeric partner</note>
    </ligand>
</feature>
<evidence type="ECO:0000255" key="1">
    <source>
        <dbReference type="HAMAP-Rule" id="MF_00352"/>
    </source>
</evidence>
<evidence type="ECO:0000305" key="2"/>
<protein>
    <recommendedName>
        <fullName evidence="1">Light-independent protochlorophyllide reductase subunit N</fullName>
        <shortName evidence="1">DPOR subunit N</shortName>
        <shortName evidence="1">LI-POR subunit N</shortName>
        <ecNumber evidence="1">1.3.7.7</ecNumber>
    </recommendedName>
</protein>
<gene>
    <name evidence="1" type="primary">chlN</name>
    <name type="ordered locus">Syncc9902_1619</name>
</gene>
<proteinExistence type="inferred from homology"/>
<reference key="1">
    <citation type="submission" date="2005-08" db="EMBL/GenBank/DDBJ databases">
        <title>Complete sequence of Synechococcus sp. CC9902.</title>
        <authorList>
            <person name="Copeland A."/>
            <person name="Lucas S."/>
            <person name="Lapidus A."/>
            <person name="Barry K."/>
            <person name="Detter J.C."/>
            <person name="Glavina T."/>
            <person name="Hammon N."/>
            <person name="Israni S."/>
            <person name="Pitluck S."/>
            <person name="Martinez M."/>
            <person name="Schmutz J."/>
            <person name="Larimer F."/>
            <person name="Land M."/>
            <person name="Kyrpides N."/>
            <person name="Ivanova N."/>
            <person name="Richardson P."/>
        </authorList>
    </citation>
    <scope>NUCLEOTIDE SEQUENCE [LARGE SCALE GENOMIC DNA]</scope>
    <source>
        <strain>CC9902</strain>
    </source>
</reference>
<dbReference type="EC" id="1.3.7.7" evidence="1"/>
<dbReference type="EMBL" id="CP000097">
    <property type="protein sequence ID" value="ABB26577.1"/>
    <property type="status" value="ALT_INIT"/>
    <property type="molecule type" value="Genomic_DNA"/>
</dbReference>
<dbReference type="RefSeq" id="WP_037988787.1">
    <property type="nucleotide sequence ID" value="NC_007513.1"/>
</dbReference>
<dbReference type="SMR" id="Q3AWT6"/>
<dbReference type="STRING" id="316279.Syncc9902_1619"/>
<dbReference type="KEGG" id="sye:Syncc9902_1619"/>
<dbReference type="eggNOG" id="COG2710">
    <property type="taxonomic scope" value="Bacteria"/>
</dbReference>
<dbReference type="HOGENOM" id="CLU_037170_0_0_3"/>
<dbReference type="OrthoDB" id="5714774at2"/>
<dbReference type="UniPathway" id="UPA00670"/>
<dbReference type="Proteomes" id="UP000002712">
    <property type="component" value="Chromosome"/>
</dbReference>
<dbReference type="GO" id="GO:0051539">
    <property type="term" value="F:4 iron, 4 sulfur cluster binding"/>
    <property type="evidence" value="ECO:0007669"/>
    <property type="project" value="UniProtKB-UniRule"/>
</dbReference>
<dbReference type="GO" id="GO:0005524">
    <property type="term" value="F:ATP binding"/>
    <property type="evidence" value="ECO:0007669"/>
    <property type="project" value="UniProtKB-UniRule"/>
</dbReference>
<dbReference type="GO" id="GO:0046872">
    <property type="term" value="F:metal ion binding"/>
    <property type="evidence" value="ECO:0007669"/>
    <property type="project" value="UniProtKB-KW"/>
</dbReference>
<dbReference type="GO" id="GO:0016730">
    <property type="term" value="F:oxidoreductase activity, acting on iron-sulfur proteins as donors"/>
    <property type="evidence" value="ECO:0007669"/>
    <property type="project" value="InterPro"/>
</dbReference>
<dbReference type="GO" id="GO:0016636">
    <property type="term" value="F:oxidoreductase activity, acting on the CH-CH group of donors, iron-sulfur protein as acceptor"/>
    <property type="evidence" value="ECO:0007669"/>
    <property type="project" value="UniProtKB-UniRule"/>
</dbReference>
<dbReference type="GO" id="GO:0036068">
    <property type="term" value="P:light-independent chlorophyll biosynthetic process"/>
    <property type="evidence" value="ECO:0007669"/>
    <property type="project" value="UniProtKB-UniRule"/>
</dbReference>
<dbReference type="GO" id="GO:0019685">
    <property type="term" value="P:photosynthesis, dark reaction"/>
    <property type="evidence" value="ECO:0007669"/>
    <property type="project" value="InterPro"/>
</dbReference>
<dbReference type="Gene3D" id="3.40.50.1980">
    <property type="entry name" value="Nitrogenase molybdenum iron protein domain"/>
    <property type="match status" value="3"/>
</dbReference>
<dbReference type="HAMAP" id="MF_00352">
    <property type="entry name" value="ChlN_BchN"/>
    <property type="match status" value="1"/>
</dbReference>
<dbReference type="InterPro" id="IPR050293">
    <property type="entry name" value="LIPOR_BchN/ChlN"/>
</dbReference>
<dbReference type="InterPro" id="IPR000510">
    <property type="entry name" value="Nase/OxRdtase_comp1"/>
</dbReference>
<dbReference type="InterPro" id="IPR005970">
    <property type="entry name" value="Protochl_reductN"/>
</dbReference>
<dbReference type="NCBIfam" id="TIGR01279">
    <property type="entry name" value="DPOR_bchN"/>
    <property type="match status" value="1"/>
</dbReference>
<dbReference type="NCBIfam" id="NF002768">
    <property type="entry name" value="PRK02842.1"/>
    <property type="match status" value="1"/>
</dbReference>
<dbReference type="PANTHER" id="PTHR39429">
    <property type="entry name" value="LIGHT-INDEPENDENT PROTOCHLOROPHYLLIDE REDUCTASE SUBUNIT N"/>
    <property type="match status" value="1"/>
</dbReference>
<dbReference type="PANTHER" id="PTHR39429:SF3">
    <property type="entry name" value="LIGHT-INDEPENDENT PROTOCHLOROPHYLLIDE REDUCTASE SUBUNIT N"/>
    <property type="match status" value="1"/>
</dbReference>
<dbReference type="Pfam" id="PF00148">
    <property type="entry name" value="Oxidored_nitro"/>
    <property type="match status" value="1"/>
</dbReference>
<dbReference type="PIRSF" id="PIRSF000162">
    <property type="entry name" value="P_chlorophyll_rd"/>
    <property type="match status" value="1"/>
</dbReference>
<dbReference type="SUPFAM" id="SSF53807">
    <property type="entry name" value="Helical backbone' metal receptor"/>
    <property type="match status" value="1"/>
</dbReference>
<sequence>MSGPTLLKESGPREVFCGLTSIVWLHRRMPDAFFLVVGSRTCAHLIQSAAGVMIFAEPRFGTAILNERDLAGLADAQEELDRVAKELLQRRPEIRTLFLVGSCPSEVIKLDLSRAAERLTDELQGRVRVVNYSGSGIETTFTQGEDGALAALIPFLPSSDERQLLLVGTLADAVEDRLVHLFNKLNINAIKSLPPRQSTDLPAVGPGTTVLLTQPYLTTTARLLKDRGARVLTAPFPLGAEGSRRWMETAARDFEVDEAQIDSVLSPLMERAQIALAPHREVLKGKRIFLLPESQLELPLARFLQRECGMELVEVGTPYLNRDQMAEEIALLPEGTPVMEGQHVELQLDRVRDSKPDLVVCGMGLANPLEAEGIATKWSIELVFSPIHGIDQAGELAELFSRPLRRHQLLAH</sequence>
<accession>Q3AWT6</accession>
<keyword id="KW-0004">4Fe-4S</keyword>
<keyword id="KW-0067">ATP-binding</keyword>
<keyword id="KW-0149">Chlorophyll biosynthesis</keyword>
<keyword id="KW-0408">Iron</keyword>
<keyword id="KW-0411">Iron-sulfur</keyword>
<keyword id="KW-0479">Metal-binding</keyword>
<keyword id="KW-0547">Nucleotide-binding</keyword>
<keyword id="KW-0560">Oxidoreductase</keyword>
<keyword id="KW-0602">Photosynthesis</keyword>
<keyword id="KW-1185">Reference proteome</keyword>
<name>CHLN_SYNS9</name>
<organism>
    <name type="scientific">Synechococcus sp. (strain CC9902)</name>
    <dbReference type="NCBI Taxonomy" id="316279"/>
    <lineage>
        <taxon>Bacteria</taxon>
        <taxon>Bacillati</taxon>
        <taxon>Cyanobacteriota</taxon>
        <taxon>Cyanophyceae</taxon>
        <taxon>Synechococcales</taxon>
        <taxon>Synechococcaceae</taxon>
        <taxon>Synechococcus</taxon>
    </lineage>
</organism>
<comment type="function">
    <text evidence="1">Component of the dark-operative protochlorophyllide reductase (DPOR) that uses Mg-ATP and reduced ferredoxin to reduce ring D of protochlorophyllide (Pchlide) to form chlorophyllide a (Chlide). This reaction is light-independent. The NB-protein (ChlN-ChlB) is the catalytic component of the complex.</text>
</comment>
<comment type="catalytic activity">
    <reaction evidence="1">
        <text>chlorophyllide a + oxidized 2[4Fe-4S]-[ferredoxin] + 2 ADP + 2 phosphate = protochlorophyllide a + reduced 2[4Fe-4S]-[ferredoxin] + 2 ATP + 2 H2O</text>
        <dbReference type="Rhea" id="RHEA:28202"/>
        <dbReference type="Rhea" id="RHEA-COMP:10002"/>
        <dbReference type="Rhea" id="RHEA-COMP:10004"/>
        <dbReference type="ChEBI" id="CHEBI:15377"/>
        <dbReference type="ChEBI" id="CHEBI:30616"/>
        <dbReference type="ChEBI" id="CHEBI:33722"/>
        <dbReference type="ChEBI" id="CHEBI:33723"/>
        <dbReference type="ChEBI" id="CHEBI:43474"/>
        <dbReference type="ChEBI" id="CHEBI:83348"/>
        <dbReference type="ChEBI" id="CHEBI:83350"/>
        <dbReference type="ChEBI" id="CHEBI:456216"/>
        <dbReference type="EC" id="1.3.7.7"/>
    </reaction>
</comment>
<comment type="cofactor">
    <cofactor evidence="1">
        <name>[4Fe-4S] cluster</name>
        <dbReference type="ChEBI" id="CHEBI:49883"/>
    </cofactor>
    <text evidence="1">Binds 1 [4Fe-4S] cluster per heterodimer. The cluster is bound at the heterodimer interface by residues from both subunits.</text>
</comment>
<comment type="pathway">
    <text evidence="1">Porphyrin-containing compound metabolism; chlorophyll biosynthesis (light-independent).</text>
</comment>
<comment type="subunit">
    <text evidence="1">Protochlorophyllide reductase is composed of three subunits; ChlL, ChlN and ChlB. Forms a heterotetramer of two ChlB and two ChlN subunits.</text>
</comment>
<comment type="similarity">
    <text evidence="1">Belongs to the BchN/ChlN family.</text>
</comment>
<comment type="sequence caution" evidence="2">
    <conflict type="erroneous initiation">
        <sequence resource="EMBL-CDS" id="ABB26577"/>
    </conflict>
</comment>